<accession>Q75AK8</accession>
<dbReference type="EC" id="2.4.2.17"/>
<dbReference type="EMBL" id="AE016817">
    <property type="protein sequence ID" value="AAS51839.1"/>
    <property type="molecule type" value="Genomic_DNA"/>
</dbReference>
<dbReference type="RefSeq" id="NP_984015.1">
    <property type="nucleotide sequence ID" value="NM_209368.1"/>
</dbReference>
<dbReference type="SMR" id="Q75AK8"/>
<dbReference type="FunCoup" id="Q75AK8">
    <property type="interactions" value="216"/>
</dbReference>
<dbReference type="STRING" id="284811.Q75AK8"/>
<dbReference type="EnsemblFungi" id="AAS51839">
    <property type="protein sequence ID" value="AAS51839"/>
    <property type="gene ID" value="AGOS_ADL081C"/>
</dbReference>
<dbReference type="GeneID" id="4620157"/>
<dbReference type="KEGG" id="ago:AGOS_ADL081C"/>
<dbReference type="eggNOG" id="KOG2831">
    <property type="taxonomic scope" value="Eukaryota"/>
</dbReference>
<dbReference type="HOGENOM" id="CLU_038115_1_2_1"/>
<dbReference type="InParanoid" id="Q75AK8"/>
<dbReference type="OMA" id="YVMMDYD"/>
<dbReference type="OrthoDB" id="2574at2759"/>
<dbReference type="UniPathway" id="UPA00031">
    <property type="reaction ID" value="UER00006"/>
</dbReference>
<dbReference type="Proteomes" id="UP000000591">
    <property type="component" value="Chromosome IV"/>
</dbReference>
<dbReference type="GO" id="GO:0005737">
    <property type="term" value="C:cytoplasm"/>
    <property type="evidence" value="ECO:0007669"/>
    <property type="project" value="UniProtKB-SubCell"/>
</dbReference>
<dbReference type="GO" id="GO:0005524">
    <property type="term" value="F:ATP binding"/>
    <property type="evidence" value="ECO:0007669"/>
    <property type="project" value="UniProtKB-KW"/>
</dbReference>
<dbReference type="GO" id="GO:0003879">
    <property type="term" value="F:ATP phosphoribosyltransferase activity"/>
    <property type="evidence" value="ECO:0000318"/>
    <property type="project" value="GO_Central"/>
</dbReference>
<dbReference type="GO" id="GO:0000287">
    <property type="term" value="F:magnesium ion binding"/>
    <property type="evidence" value="ECO:0007669"/>
    <property type="project" value="InterPro"/>
</dbReference>
<dbReference type="GO" id="GO:0000105">
    <property type="term" value="P:L-histidine biosynthetic process"/>
    <property type="evidence" value="ECO:0000318"/>
    <property type="project" value="GO_Central"/>
</dbReference>
<dbReference type="FunFam" id="3.30.70.120:FF:000003">
    <property type="entry name" value="ATP phosphoribosyltransferase"/>
    <property type="match status" value="1"/>
</dbReference>
<dbReference type="FunFam" id="3.40.190.10:FF:000082">
    <property type="entry name" value="ATP phosphoribosyltransferase"/>
    <property type="match status" value="1"/>
</dbReference>
<dbReference type="FunFam" id="3.40.190.10:FF:000123">
    <property type="entry name" value="HIS1p ATP phosphoribosyltransferase"/>
    <property type="match status" value="1"/>
</dbReference>
<dbReference type="Gene3D" id="3.30.70.120">
    <property type="match status" value="1"/>
</dbReference>
<dbReference type="Gene3D" id="3.40.190.10">
    <property type="entry name" value="Periplasmic binding protein-like II"/>
    <property type="match status" value="2"/>
</dbReference>
<dbReference type="HAMAP" id="MF_00079">
    <property type="entry name" value="HisG_Long"/>
    <property type="match status" value="1"/>
</dbReference>
<dbReference type="InterPro" id="IPR020621">
    <property type="entry name" value="ATP-PRT_HisG_long"/>
</dbReference>
<dbReference type="InterPro" id="IPR013820">
    <property type="entry name" value="ATP_PRibTrfase_cat"/>
</dbReference>
<dbReference type="InterPro" id="IPR018198">
    <property type="entry name" value="ATP_PRibTrfase_CS"/>
</dbReference>
<dbReference type="InterPro" id="IPR001348">
    <property type="entry name" value="ATP_PRibTrfase_HisG"/>
</dbReference>
<dbReference type="InterPro" id="IPR013115">
    <property type="entry name" value="HisG_C"/>
</dbReference>
<dbReference type="InterPro" id="IPR011322">
    <property type="entry name" value="N-reg_PII-like_a/b"/>
</dbReference>
<dbReference type="InterPro" id="IPR015867">
    <property type="entry name" value="N-reg_PII/ATP_PRibTrfase_C"/>
</dbReference>
<dbReference type="NCBIfam" id="TIGR00070">
    <property type="entry name" value="hisG"/>
    <property type="match status" value="1"/>
</dbReference>
<dbReference type="NCBIfam" id="TIGR03455">
    <property type="entry name" value="HisG_C-term"/>
    <property type="match status" value="1"/>
</dbReference>
<dbReference type="PANTHER" id="PTHR21403:SF8">
    <property type="entry name" value="ATP PHOSPHORIBOSYLTRANSFERASE"/>
    <property type="match status" value="1"/>
</dbReference>
<dbReference type="PANTHER" id="PTHR21403">
    <property type="entry name" value="ATP PHOSPHORIBOSYLTRANSFERASE ATP-PRTASE"/>
    <property type="match status" value="1"/>
</dbReference>
<dbReference type="Pfam" id="PF01634">
    <property type="entry name" value="HisG"/>
    <property type="match status" value="1"/>
</dbReference>
<dbReference type="Pfam" id="PF08029">
    <property type="entry name" value="HisG_C"/>
    <property type="match status" value="1"/>
</dbReference>
<dbReference type="SUPFAM" id="SSF54913">
    <property type="entry name" value="GlnB-like"/>
    <property type="match status" value="1"/>
</dbReference>
<dbReference type="SUPFAM" id="SSF53850">
    <property type="entry name" value="Periplasmic binding protein-like II"/>
    <property type="match status" value="1"/>
</dbReference>
<dbReference type="PROSITE" id="PS01316">
    <property type="entry name" value="ATP_P_PHORIBOSYLTR"/>
    <property type="match status" value="1"/>
</dbReference>
<proteinExistence type="inferred from homology"/>
<feature type="chain" id="PRO_0000151951" description="ATP phosphoribosyltransferase">
    <location>
        <begin position="1"/>
        <end position="297"/>
    </location>
</feature>
<evidence type="ECO:0000250" key="1"/>
<evidence type="ECO:0000305" key="2"/>
<comment type="function">
    <text evidence="1">Catalyzes the condensation of ATP and 5-phosphoribose 1-diphosphate to form N'-(5'-phosphoribosyl)-ATP (PR-ATP). Has a crucial role in the pathway because the rate of histidine biosynthesis seems to be controlled primarily by regulation of the enzymatic activity (By similarity).</text>
</comment>
<comment type="catalytic activity">
    <reaction>
        <text>1-(5-phospho-beta-D-ribosyl)-ATP + diphosphate = 5-phospho-alpha-D-ribose 1-diphosphate + ATP</text>
        <dbReference type="Rhea" id="RHEA:18473"/>
        <dbReference type="ChEBI" id="CHEBI:30616"/>
        <dbReference type="ChEBI" id="CHEBI:33019"/>
        <dbReference type="ChEBI" id="CHEBI:58017"/>
        <dbReference type="ChEBI" id="CHEBI:73183"/>
        <dbReference type="EC" id="2.4.2.17"/>
    </reaction>
</comment>
<comment type="pathway">
    <text>Amino-acid biosynthesis; L-histidine biosynthesis; L-histidine from 5-phospho-alpha-D-ribose 1-diphosphate: step 1/9.</text>
</comment>
<comment type="subcellular location">
    <subcellularLocation>
        <location evidence="1">Cytoplasm</location>
    </subcellularLocation>
</comment>
<comment type="similarity">
    <text evidence="2">Belongs to the ATP phosphoribosyltransferase family.</text>
</comment>
<name>HIS1_EREGS</name>
<sequence>MDLVRQLNDRLLFAVPKKGRLYEKSVALLNGADILFHRSHRLDIALSTSTPVALIFLPAADIPTFVGEGRCDLGITGVDQVRESGVNVELLQDLDFGRCQLQVQVPAGGPYSQPEQLIGKTIVTSFTRLAREYFARLEGVDEAAMTTRVKYVGGSVEAACALGVADAIVDLVESGETMRAAGLTPIGTVLSTSAHLICSPNPKSSLALLDTVRARIEGVLAAQHYVYCTYNAHADALPALLRITPGRRAPTISKLDDDNWYAVSSMIIRREKGRILDDLKASGAEDIMVFEISNCRV</sequence>
<keyword id="KW-0028">Amino-acid biosynthesis</keyword>
<keyword id="KW-0067">ATP-binding</keyword>
<keyword id="KW-0963">Cytoplasm</keyword>
<keyword id="KW-0328">Glycosyltransferase</keyword>
<keyword id="KW-0368">Histidine biosynthesis</keyword>
<keyword id="KW-0547">Nucleotide-binding</keyword>
<keyword id="KW-1185">Reference proteome</keyword>
<keyword id="KW-0808">Transferase</keyword>
<protein>
    <recommendedName>
        <fullName>ATP phosphoribosyltransferase</fullName>
        <shortName>ATP-PRT</shortName>
        <shortName>ATP-PRTase</shortName>
        <ecNumber>2.4.2.17</ecNumber>
    </recommendedName>
</protein>
<organism>
    <name type="scientific">Eremothecium gossypii (strain ATCC 10895 / CBS 109.51 / FGSC 9923 / NRRL Y-1056)</name>
    <name type="common">Yeast</name>
    <name type="synonym">Ashbya gossypii</name>
    <dbReference type="NCBI Taxonomy" id="284811"/>
    <lineage>
        <taxon>Eukaryota</taxon>
        <taxon>Fungi</taxon>
        <taxon>Dikarya</taxon>
        <taxon>Ascomycota</taxon>
        <taxon>Saccharomycotina</taxon>
        <taxon>Saccharomycetes</taxon>
        <taxon>Saccharomycetales</taxon>
        <taxon>Saccharomycetaceae</taxon>
        <taxon>Eremothecium</taxon>
    </lineage>
</organism>
<reference key="1">
    <citation type="journal article" date="2004" name="Science">
        <title>The Ashbya gossypii genome as a tool for mapping the ancient Saccharomyces cerevisiae genome.</title>
        <authorList>
            <person name="Dietrich F.S."/>
            <person name="Voegeli S."/>
            <person name="Brachat S."/>
            <person name="Lerch A."/>
            <person name="Gates K."/>
            <person name="Steiner S."/>
            <person name="Mohr C."/>
            <person name="Poehlmann R."/>
            <person name="Luedi P."/>
            <person name="Choi S."/>
            <person name="Wing R.A."/>
            <person name="Flavier A."/>
            <person name="Gaffney T.D."/>
            <person name="Philippsen P."/>
        </authorList>
    </citation>
    <scope>NUCLEOTIDE SEQUENCE [LARGE SCALE GENOMIC DNA]</scope>
    <source>
        <strain>ATCC 10895 / CBS 109.51 / FGSC 9923 / NRRL Y-1056</strain>
    </source>
</reference>
<reference key="2">
    <citation type="journal article" date="2013" name="G3 (Bethesda)">
        <title>Genomes of Ashbya fungi isolated from insects reveal four mating-type loci, numerous translocations, lack of transposons, and distinct gene duplications.</title>
        <authorList>
            <person name="Dietrich F.S."/>
            <person name="Voegeli S."/>
            <person name="Kuo S."/>
            <person name="Philippsen P."/>
        </authorList>
    </citation>
    <scope>GENOME REANNOTATION</scope>
    <source>
        <strain>ATCC 10895 / CBS 109.51 / FGSC 9923 / NRRL Y-1056</strain>
    </source>
</reference>
<gene>
    <name type="primary">HIS1</name>
    <name type="ordered locus">ADL081C</name>
</gene>